<proteinExistence type="evidence at protein level"/>
<organism>
    <name type="scientific">Danio rerio</name>
    <name type="common">Zebrafish</name>
    <name type="synonym">Brachydanio rerio</name>
    <dbReference type="NCBI Taxonomy" id="7955"/>
    <lineage>
        <taxon>Eukaryota</taxon>
        <taxon>Metazoa</taxon>
        <taxon>Chordata</taxon>
        <taxon>Craniata</taxon>
        <taxon>Vertebrata</taxon>
        <taxon>Euteleostomi</taxon>
        <taxon>Actinopterygii</taxon>
        <taxon>Neopterygii</taxon>
        <taxon>Teleostei</taxon>
        <taxon>Ostariophysi</taxon>
        <taxon>Cypriniformes</taxon>
        <taxon>Danionidae</taxon>
        <taxon>Danioninae</taxon>
        <taxon>Danio</taxon>
    </lineage>
</organism>
<comment type="function">
    <text evidence="1 2">Fructose-bisphosphatase hydrolyzing fructose-2,6-bisphosphate as well as fructose-1,6-bisphosphate. Acts as a negative regulator of glycolysis by lowering intracellular levels of fructose-2,6-bisphosphate in a p53/TP53-dependent manner, resulting in the pentose phosphate pathway (PPP) activation and NADPH production. Contributes to the generation of reduced glutathione to cause a decrease in intracellular reactive oxygen species (ROS) content, correlating with its ability to protect cells from oxidative or metabolic stress-induced cell death. May play a role in mitophagy inhibition.</text>
</comment>
<comment type="catalytic activity">
    <reaction evidence="2">
        <text>beta-D-fructose 2,6-bisphosphate + H2O = beta-D-fructose 6-phosphate + phosphate</text>
        <dbReference type="Rhea" id="RHEA:17289"/>
        <dbReference type="ChEBI" id="CHEBI:15377"/>
        <dbReference type="ChEBI" id="CHEBI:43474"/>
        <dbReference type="ChEBI" id="CHEBI:57634"/>
        <dbReference type="ChEBI" id="CHEBI:58579"/>
        <dbReference type="EC" id="3.1.3.46"/>
    </reaction>
</comment>
<comment type="subcellular location">
    <subcellularLocation>
        <location evidence="1">Cytoplasm</location>
    </subcellularLocation>
    <subcellularLocation>
        <location evidence="2">Nucleus</location>
    </subcellularLocation>
    <subcellularLocation>
        <location evidence="1">Mitochondrion</location>
    </subcellularLocation>
</comment>
<comment type="similarity">
    <text evidence="4">Belongs to the phosphoglycerate mutase family.</text>
</comment>
<comment type="caution">
    <text evidence="4">Not expected to have any kinase activity.</text>
</comment>
<evidence type="ECO:0000250" key="1">
    <source>
        <dbReference type="UniProtKB" id="Q8BZA9"/>
    </source>
</evidence>
<evidence type="ECO:0000250" key="2">
    <source>
        <dbReference type="UniProtKB" id="Q9NQ88"/>
    </source>
</evidence>
<evidence type="ECO:0000269" key="3">
    <source>
    </source>
</evidence>
<evidence type="ECO:0000305" key="4"/>
<evidence type="ECO:0000305" key="5">
    <source>
    </source>
</evidence>
<evidence type="ECO:0007829" key="6">
    <source>
        <dbReference type="PDB" id="3E9C"/>
    </source>
</evidence>
<evidence type="ECO:0007829" key="7">
    <source>
        <dbReference type="PDB" id="3E9D"/>
    </source>
</evidence>
<evidence type="ECO:0007829" key="8">
    <source>
        <dbReference type="PDB" id="3E9E"/>
    </source>
</evidence>
<dbReference type="EC" id="3.1.3.46" evidence="2"/>
<dbReference type="EMBL" id="CR751235">
    <property type="protein sequence ID" value="CAK04686.1"/>
    <property type="molecule type" value="Genomic_DNA"/>
</dbReference>
<dbReference type="EMBL" id="BC045897">
    <property type="protein sequence ID" value="AAH45897.1"/>
    <property type="molecule type" value="mRNA"/>
</dbReference>
<dbReference type="RefSeq" id="NP_956485.1">
    <property type="nucleotide sequence ID" value="NM_200191.1"/>
</dbReference>
<dbReference type="PDB" id="3E9C">
    <property type="method" value="X-ray"/>
    <property type="resolution" value="2.00 A"/>
    <property type="chains" value="A/B=1-257"/>
</dbReference>
<dbReference type="PDB" id="3E9D">
    <property type="method" value="X-ray"/>
    <property type="resolution" value="2.00 A"/>
    <property type="chains" value="A/B=1-257"/>
</dbReference>
<dbReference type="PDB" id="3E9E">
    <property type="method" value="X-ray"/>
    <property type="resolution" value="2.10 A"/>
    <property type="chains" value="A/B=1-257"/>
</dbReference>
<dbReference type="PDBsum" id="3E9C"/>
<dbReference type="PDBsum" id="3E9D"/>
<dbReference type="PDBsum" id="3E9E"/>
<dbReference type="SMR" id="Q7ZVE3"/>
<dbReference type="FunCoup" id="Q7ZVE3">
    <property type="interactions" value="99"/>
</dbReference>
<dbReference type="STRING" id="7955.ENSDARP00000067391"/>
<dbReference type="PaxDb" id="7955-ENSDARP00000067391"/>
<dbReference type="GeneID" id="393160"/>
<dbReference type="KEGG" id="dre:393160"/>
<dbReference type="AGR" id="ZFIN:ZDB-GENE-040426-885"/>
<dbReference type="CTD" id="393160"/>
<dbReference type="ZFIN" id="ZDB-GENE-040426-885">
    <property type="gene designation" value="tigarb"/>
</dbReference>
<dbReference type="eggNOG" id="KOG0235">
    <property type="taxonomic scope" value="Eukaryota"/>
</dbReference>
<dbReference type="InParanoid" id="Q7ZVE3"/>
<dbReference type="OrthoDB" id="354304at2759"/>
<dbReference type="PhylomeDB" id="Q7ZVE3"/>
<dbReference type="TreeFam" id="TF329053"/>
<dbReference type="EvolutionaryTrace" id="Q7ZVE3"/>
<dbReference type="PRO" id="PR:Q7ZVE3"/>
<dbReference type="Proteomes" id="UP000000437">
    <property type="component" value="Chromosome 4"/>
</dbReference>
<dbReference type="GO" id="GO:0005737">
    <property type="term" value="C:cytoplasm"/>
    <property type="evidence" value="ECO:0000250"/>
    <property type="project" value="UniProtKB"/>
</dbReference>
<dbReference type="GO" id="GO:0005829">
    <property type="term" value="C:cytosol"/>
    <property type="evidence" value="ECO:0000318"/>
    <property type="project" value="GO_Central"/>
</dbReference>
<dbReference type="GO" id="GO:0005741">
    <property type="term" value="C:mitochondrial outer membrane"/>
    <property type="evidence" value="ECO:0000250"/>
    <property type="project" value="UniProtKB"/>
</dbReference>
<dbReference type="GO" id="GO:0005739">
    <property type="term" value="C:mitochondrion"/>
    <property type="evidence" value="ECO:0000250"/>
    <property type="project" value="UniProtKB"/>
</dbReference>
<dbReference type="GO" id="GO:0005634">
    <property type="term" value="C:nucleus"/>
    <property type="evidence" value="ECO:0000250"/>
    <property type="project" value="UniProtKB"/>
</dbReference>
<dbReference type="GO" id="GO:0003824">
    <property type="term" value="F:catalytic activity"/>
    <property type="evidence" value="ECO:0000314"/>
    <property type="project" value="ZFIN"/>
</dbReference>
<dbReference type="GO" id="GO:0004331">
    <property type="term" value="F:fructose-2,6-bisphosphate 2-phosphatase activity"/>
    <property type="evidence" value="ECO:0000314"/>
    <property type="project" value="UniProtKB"/>
</dbReference>
<dbReference type="GO" id="GO:0006915">
    <property type="term" value="P:apoptotic process"/>
    <property type="evidence" value="ECO:0007669"/>
    <property type="project" value="UniProtKB-KW"/>
</dbReference>
<dbReference type="GO" id="GO:0006914">
    <property type="term" value="P:autophagy"/>
    <property type="evidence" value="ECO:0007669"/>
    <property type="project" value="UniProtKB-KW"/>
</dbReference>
<dbReference type="GO" id="GO:0045820">
    <property type="term" value="P:negative regulation of glycolytic process"/>
    <property type="evidence" value="ECO:0000318"/>
    <property type="project" value="GO_Central"/>
</dbReference>
<dbReference type="GO" id="GO:0043456">
    <property type="term" value="P:regulation of pentose-phosphate shunt"/>
    <property type="evidence" value="ECO:0000318"/>
    <property type="project" value="GO_Central"/>
</dbReference>
<dbReference type="CDD" id="cd07067">
    <property type="entry name" value="HP_PGM_like"/>
    <property type="match status" value="1"/>
</dbReference>
<dbReference type="FunFam" id="3.40.50.1240:FF:000116">
    <property type="entry name" value="Fructose-2,6-bisphosphatase TIGAR B"/>
    <property type="match status" value="1"/>
</dbReference>
<dbReference type="Gene3D" id="3.40.50.1240">
    <property type="entry name" value="Phosphoglycerate mutase-like"/>
    <property type="match status" value="1"/>
</dbReference>
<dbReference type="InterPro" id="IPR013078">
    <property type="entry name" value="His_Pase_superF_clade-1"/>
</dbReference>
<dbReference type="InterPro" id="IPR029033">
    <property type="entry name" value="His_PPase_superfam"/>
</dbReference>
<dbReference type="InterPro" id="IPR001345">
    <property type="entry name" value="PG/BPGM_mutase_AS"/>
</dbReference>
<dbReference type="InterPro" id="IPR051695">
    <property type="entry name" value="Phosphoglycerate_Mutase"/>
</dbReference>
<dbReference type="PANTHER" id="PTHR46517">
    <property type="entry name" value="FRUCTOSE-2,6-BISPHOSPHATASE TIGAR"/>
    <property type="match status" value="1"/>
</dbReference>
<dbReference type="PANTHER" id="PTHR46517:SF2">
    <property type="entry name" value="FRUCTOSE-2,6-BISPHOSPHATASE TIGAR B"/>
    <property type="match status" value="1"/>
</dbReference>
<dbReference type="Pfam" id="PF00300">
    <property type="entry name" value="His_Phos_1"/>
    <property type="match status" value="1"/>
</dbReference>
<dbReference type="SMART" id="SM00855">
    <property type="entry name" value="PGAM"/>
    <property type="match status" value="1"/>
</dbReference>
<dbReference type="SUPFAM" id="SSF53254">
    <property type="entry name" value="Phosphoglycerate mutase-like"/>
    <property type="match status" value="1"/>
</dbReference>
<dbReference type="PROSITE" id="PS00175">
    <property type="entry name" value="PG_MUTASE"/>
    <property type="match status" value="1"/>
</dbReference>
<protein>
    <recommendedName>
        <fullName evidence="4">Fructose-2,6-bisphosphatase TIGAR B</fullName>
        <ecNumber evidence="2">3.1.3.46</ecNumber>
    </recommendedName>
    <alternativeName>
        <fullName evidence="2">TP53-induced glycolysis and apoptosis regulator B</fullName>
    </alternativeName>
</protein>
<name>TIGRB_DANRE</name>
<accession>Q7ZVE3</accession>
<accession>Q1L8M5</accession>
<reference key="1">
    <citation type="journal article" date="2013" name="Nature">
        <title>The zebrafish reference genome sequence and its relationship to the human genome.</title>
        <authorList>
            <person name="Howe K."/>
            <person name="Clark M.D."/>
            <person name="Torroja C.F."/>
            <person name="Torrance J."/>
            <person name="Berthelot C."/>
            <person name="Muffato M."/>
            <person name="Collins J.E."/>
            <person name="Humphray S."/>
            <person name="McLaren K."/>
            <person name="Matthews L."/>
            <person name="McLaren S."/>
            <person name="Sealy I."/>
            <person name="Caccamo M."/>
            <person name="Churcher C."/>
            <person name="Scott C."/>
            <person name="Barrett J.C."/>
            <person name="Koch R."/>
            <person name="Rauch G.J."/>
            <person name="White S."/>
            <person name="Chow W."/>
            <person name="Kilian B."/>
            <person name="Quintais L.T."/>
            <person name="Guerra-Assuncao J.A."/>
            <person name="Zhou Y."/>
            <person name="Gu Y."/>
            <person name="Yen J."/>
            <person name="Vogel J.H."/>
            <person name="Eyre T."/>
            <person name="Redmond S."/>
            <person name="Banerjee R."/>
            <person name="Chi J."/>
            <person name="Fu B."/>
            <person name="Langley E."/>
            <person name="Maguire S.F."/>
            <person name="Laird G.K."/>
            <person name="Lloyd D."/>
            <person name="Kenyon E."/>
            <person name="Donaldson S."/>
            <person name="Sehra H."/>
            <person name="Almeida-King J."/>
            <person name="Loveland J."/>
            <person name="Trevanion S."/>
            <person name="Jones M."/>
            <person name="Quail M."/>
            <person name="Willey D."/>
            <person name="Hunt A."/>
            <person name="Burton J."/>
            <person name="Sims S."/>
            <person name="McLay K."/>
            <person name="Plumb B."/>
            <person name="Davis J."/>
            <person name="Clee C."/>
            <person name="Oliver K."/>
            <person name="Clark R."/>
            <person name="Riddle C."/>
            <person name="Elliot D."/>
            <person name="Threadgold G."/>
            <person name="Harden G."/>
            <person name="Ware D."/>
            <person name="Begum S."/>
            <person name="Mortimore B."/>
            <person name="Kerry G."/>
            <person name="Heath P."/>
            <person name="Phillimore B."/>
            <person name="Tracey A."/>
            <person name="Corby N."/>
            <person name="Dunn M."/>
            <person name="Johnson C."/>
            <person name="Wood J."/>
            <person name="Clark S."/>
            <person name="Pelan S."/>
            <person name="Griffiths G."/>
            <person name="Smith M."/>
            <person name="Glithero R."/>
            <person name="Howden P."/>
            <person name="Barker N."/>
            <person name="Lloyd C."/>
            <person name="Stevens C."/>
            <person name="Harley J."/>
            <person name="Holt K."/>
            <person name="Panagiotidis G."/>
            <person name="Lovell J."/>
            <person name="Beasley H."/>
            <person name="Henderson C."/>
            <person name="Gordon D."/>
            <person name="Auger K."/>
            <person name="Wright D."/>
            <person name="Collins J."/>
            <person name="Raisen C."/>
            <person name="Dyer L."/>
            <person name="Leung K."/>
            <person name="Robertson L."/>
            <person name="Ambridge K."/>
            <person name="Leongamornlert D."/>
            <person name="McGuire S."/>
            <person name="Gilderthorp R."/>
            <person name="Griffiths C."/>
            <person name="Manthravadi D."/>
            <person name="Nichol S."/>
            <person name="Barker G."/>
            <person name="Whitehead S."/>
            <person name="Kay M."/>
            <person name="Brown J."/>
            <person name="Murnane C."/>
            <person name="Gray E."/>
            <person name="Humphries M."/>
            <person name="Sycamore N."/>
            <person name="Barker D."/>
            <person name="Saunders D."/>
            <person name="Wallis J."/>
            <person name="Babbage A."/>
            <person name="Hammond S."/>
            <person name="Mashreghi-Mohammadi M."/>
            <person name="Barr L."/>
            <person name="Martin S."/>
            <person name="Wray P."/>
            <person name="Ellington A."/>
            <person name="Matthews N."/>
            <person name="Ellwood M."/>
            <person name="Woodmansey R."/>
            <person name="Clark G."/>
            <person name="Cooper J."/>
            <person name="Tromans A."/>
            <person name="Grafham D."/>
            <person name="Skuce C."/>
            <person name="Pandian R."/>
            <person name="Andrews R."/>
            <person name="Harrison E."/>
            <person name="Kimberley A."/>
            <person name="Garnett J."/>
            <person name="Fosker N."/>
            <person name="Hall R."/>
            <person name="Garner P."/>
            <person name="Kelly D."/>
            <person name="Bird C."/>
            <person name="Palmer S."/>
            <person name="Gehring I."/>
            <person name="Berger A."/>
            <person name="Dooley C.M."/>
            <person name="Ersan-Urun Z."/>
            <person name="Eser C."/>
            <person name="Geiger H."/>
            <person name="Geisler M."/>
            <person name="Karotki L."/>
            <person name="Kirn A."/>
            <person name="Konantz J."/>
            <person name="Konantz M."/>
            <person name="Oberlander M."/>
            <person name="Rudolph-Geiger S."/>
            <person name="Teucke M."/>
            <person name="Lanz C."/>
            <person name="Raddatz G."/>
            <person name="Osoegawa K."/>
            <person name="Zhu B."/>
            <person name="Rapp A."/>
            <person name="Widaa S."/>
            <person name="Langford C."/>
            <person name="Yang F."/>
            <person name="Schuster S.C."/>
            <person name="Carter N.P."/>
            <person name="Harrow J."/>
            <person name="Ning Z."/>
            <person name="Herrero J."/>
            <person name="Searle S.M."/>
            <person name="Enright A."/>
            <person name="Geisler R."/>
            <person name="Plasterk R.H."/>
            <person name="Lee C."/>
            <person name="Westerfield M."/>
            <person name="de Jong P.J."/>
            <person name="Zon L.I."/>
            <person name="Postlethwait J.H."/>
            <person name="Nusslein-Volhard C."/>
            <person name="Hubbard T.J."/>
            <person name="Roest Crollius H."/>
            <person name="Rogers J."/>
            <person name="Stemple D.L."/>
        </authorList>
    </citation>
    <scope>NUCLEOTIDE SEQUENCE [LARGE SCALE GENOMIC DNA]</scope>
    <source>
        <strain>Tuebingen</strain>
    </source>
</reference>
<reference key="2">
    <citation type="submission" date="2003-01" db="EMBL/GenBank/DDBJ databases">
        <authorList>
            <consortium name="NIH - Zebrafish Gene Collection (ZGC) project"/>
        </authorList>
    </citation>
    <scope>NUCLEOTIDE SEQUENCE [LARGE SCALE MRNA]</scope>
</reference>
<reference key="3">
    <citation type="journal article" date="2009" name="J. Biol. Chem.">
        <title>Structural and biochemical studies of TIGAR (TP53-induced glycolysis and apoptosis regulator).</title>
        <authorList>
            <person name="Li H."/>
            <person name="Jogl G."/>
        </authorList>
    </citation>
    <scope>X-RAY CRYSTALLOGRAPHY (2.0 ANGSTROMS)</scope>
    <scope>CATALYTIC ACTIVITY</scope>
    <scope>ACTIVE SITE</scope>
</reference>
<keyword id="KW-0002">3D-structure</keyword>
<keyword id="KW-0053">Apoptosis</keyword>
<keyword id="KW-0072">Autophagy</keyword>
<keyword id="KW-0963">Cytoplasm</keyword>
<keyword id="KW-0378">Hydrolase</keyword>
<keyword id="KW-0496">Mitochondrion</keyword>
<keyword id="KW-0539">Nucleus</keyword>
<keyword id="KW-1185">Reference proteome</keyword>
<gene>
    <name evidence="2" type="primary">tigarb</name>
    <name type="ORF">si:ch211-240j22.3</name>
    <name type="ORF">zgc:56074</name>
</gene>
<feature type="chain" id="PRO_0000363068" description="Fructose-2,6-bisphosphatase TIGAR B">
    <location>
        <begin position="1"/>
        <end position="257"/>
    </location>
</feature>
<feature type="active site" description="Tele-phosphohistidine intermediate" evidence="3">
    <location>
        <position position="11"/>
    </location>
</feature>
<feature type="active site" description="Proton donor/acceptor" evidence="5">
    <location>
        <position position="89"/>
    </location>
</feature>
<feature type="site" description="Transition state stabilizer" evidence="5">
    <location>
        <position position="183"/>
    </location>
</feature>
<feature type="sequence conflict" description="In Ref. 1; CAK04686." evidence="4" ref="1">
    <original>R</original>
    <variation>H</variation>
    <location>
        <position position="44"/>
    </location>
</feature>
<feature type="sequence conflict" description="In Ref. 1; CAK04686." evidence="4" ref="1">
    <original>S</original>
    <variation>A</variation>
    <location>
        <position position="113"/>
    </location>
</feature>
<feature type="sequence conflict" description="In Ref. 1; CAK04686." evidence="4" ref="1">
    <original>M</original>
    <variation>K</variation>
    <location>
        <position position="134"/>
    </location>
</feature>
<feature type="sequence conflict" description="In Ref. 2; AAH45897." evidence="4" ref="2">
    <original>L</original>
    <variation>F</variation>
    <location>
        <position position="144"/>
    </location>
</feature>
<feature type="sequence conflict" description="In Ref. 2; AAH45897." evidence="4" ref="2">
    <original>A</original>
    <variation>V</variation>
    <location>
        <position position="154"/>
    </location>
</feature>
<feature type="sequence conflict" description="In Ref. 1; CAK04686." evidence="4" ref="1">
    <original>I</original>
    <variation>V</variation>
    <location>
        <position position="189"/>
    </location>
</feature>
<feature type="strand" evidence="6">
    <location>
        <begin position="2"/>
        <end position="10"/>
    </location>
</feature>
<feature type="helix" evidence="7">
    <location>
        <begin position="15"/>
        <end position="18"/>
    </location>
</feature>
<feature type="turn" evidence="8">
    <location>
        <begin position="24"/>
        <end position="26"/>
    </location>
</feature>
<feature type="helix" evidence="6">
    <location>
        <begin position="33"/>
        <end position="45"/>
    </location>
</feature>
<feature type="turn" evidence="6">
    <location>
        <begin position="46"/>
        <end position="48"/>
    </location>
</feature>
<feature type="strand" evidence="6">
    <location>
        <begin position="52"/>
        <end position="56"/>
    </location>
</feature>
<feature type="helix" evidence="6">
    <location>
        <begin position="60"/>
        <end position="71"/>
    </location>
</feature>
<feature type="strand" evidence="6">
    <location>
        <begin position="81"/>
        <end position="83"/>
    </location>
</feature>
<feature type="helix" evidence="6">
    <location>
        <begin position="85"/>
        <end position="87"/>
    </location>
</feature>
<feature type="helix" evidence="7">
    <location>
        <begin position="93"/>
        <end position="95"/>
    </location>
</feature>
<feature type="helix" evidence="7">
    <location>
        <begin position="100"/>
        <end position="110"/>
    </location>
</feature>
<feature type="turn" evidence="7">
    <location>
        <begin position="114"/>
        <end position="116"/>
    </location>
</feature>
<feature type="helix" evidence="6">
    <location>
        <begin position="125"/>
        <end position="147"/>
    </location>
</feature>
<feature type="strand" evidence="6">
    <location>
        <begin position="149"/>
        <end position="151"/>
    </location>
</feature>
<feature type="turn" evidence="6">
    <location>
        <begin position="167"/>
        <end position="170"/>
    </location>
</feature>
<feature type="strand" evidence="6">
    <location>
        <begin position="177"/>
        <end position="182"/>
    </location>
</feature>
<feature type="helix" evidence="6">
    <location>
        <begin position="184"/>
        <end position="196"/>
    </location>
</feature>
<feature type="strand" evidence="6">
    <location>
        <begin position="200"/>
        <end position="202"/>
    </location>
</feature>
<feature type="helix" evidence="6">
    <location>
        <begin position="208"/>
        <end position="211"/>
    </location>
</feature>
<feature type="strand" evidence="6">
    <location>
        <begin position="220"/>
        <end position="230"/>
    </location>
</feature>
<feature type="strand" evidence="6">
    <location>
        <begin position="233"/>
        <end position="246"/>
    </location>
</feature>
<sequence length="257" mass="28439">MLTFALTIVRHGETQYNRDKLLQGQGIDTPLSDTGHQQAAAAGRYLKDLHFTNVFVSNLQRAIQTAEIILGNNLHSSATEMILDPLLRERGFGVAEGRPKEHLKNMANAAGQSCRDYTPPGGETLEQVKTRFKMFLKSLFQRMLEEHGSALSSAPSEADQPVIAGLADDGAQNVPVHALMVSHGAFIRISVRHLVEDLQCCLPAGLKMNQVFSPCPNTGISRFIFTIHREESVLRATRIQGVFINRKDHLEEVKNSD</sequence>